<name>LACB_STRE4</name>
<keyword id="KW-0413">Isomerase</keyword>
<keyword id="KW-0423">Lactose metabolism</keyword>
<comment type="catalytic activity">
    <reaction evidence="1">
        <text>aldehydo-D-galactose 6-phosphate = keto-D-tagatose 6-phosphate</text>
        <dbReference type="Rhea" id="RHEA:13033"/>
        <dbReference type="ChEBI" id="CHEBI:58255"/>
        <dbReference type="ChEBI" id="CHEBI:134283"/>
        <dbReference type="EC" id="5.3.1.26"/>
    </reaction>
</comment>
<comment type="pathway">
    <text evidence="1">Carbohydrate metabolism; D-galactose 6-phosphate degradation; D-tagatose 6-phosphate from D-galactose 6-phosphate: step 1/1.</text>
</comment>
<comment type="subunit">
    <text evidence="1">Heteromultimeric protein consisting of LacA and LacB.</text>
</comment>
<comment type="similarity">
    <text evidence="1">Belongs to the LacAB/RpiB family.</text>
</comment>
<protein>
    <recommendedName>
        <fullName evidence="1">Galactose-6-phosphate isomerase subunit LacB</fullName>
        <ecNumber evidence="1">5.3.1.26</ecNumber>
    </recommendedName>
</protein>
<reference key="1">
    <citation type="journal article" date="2009" name="PLoS Pathog.">
        <title>Genomic evidence for the evolution of Streptococcus equi: host restriction, increased virulence, and genetic exchange with human pathogens.</title>
        <authorList>
            <person name="Holden M.T.G."/>
            <person name="Heather Z."/>
            <person name="Paillot R."/>
            <person name="Steward K.F."/>
            <person name="Webb K."/>
            <person name="Ainslie F."/>
            <person name="Jourdan T."/>
            <person name="Bason N.C."/>
            <person name="Holroyd N.E."/>
            <person name="Mungall K."/>
            <person name="Quail M.A."/>
            <person name="Sanders M."/>
            <person name="Simmonds M."/>
            <person name="Willey D."/>
            <person name="Brooks K."/>
            <person name="Aanensen D.M."/>
            <person name="Spratt B.G."/>
            <person name="Jolley K.A."/>
            <person name="Maiden M.C.J."/>
            <person name="Kehoe M."/>
            <person name="Chanter N."/>
            <person name="Bentley S.D."/>
            <person name="Robinson C."/>
            <person name="Maskell D.J."/>
            <person name="Parkhill J."/>
            <person name="Waller A.S."/>
        </authorList>
    </citation>
    <scope>NUCLEOTIDE SEQUENCE [LARGE SCALE GENOMIC DNA]</scope>
    <source>
        <strain>4047</strain>
    </source>
</reference>
<feature type="chain" id="PRO_1000185402" description="Galactose-6-phosphate isomerase subunit LacB">
    <location>
        <begin position="1"/>
        <end position="171"/>
    </location>
</feature>
<accession>C0M8Q7</accession>
<dbReference type="EC" id="5.3.1.26" evidence="1"/>
<dbReference type="EMBL" id="FM204883">
    <property type="protein sequence ID" value="CAW92765.1"/>
    <property type="molecule type" value="Genomic_DNA"/>
</dbReference>
<dbReference type="RefSeq" id="WP_012679109.1">
    <property type="nucleotide sequence ID" value="NC_012471.1"/>
</dbReference>
<dbReference type="SMR" id="C0M8Q7"/>
<dbReference type="KEGG" id="seu:SEQ_0528"/>
<dbReference type="HOGENOM" id="CLU_091396_2_0_9"/>
<dbReference type="OrthoDB" id="1778624at2"/>
<dbReference type="UniPathway" id="UPA00702">
    <property type="reaction ID" value="UER00714"/>
</dbReference>
<dbReference type="Proteomes" id="UP000001365">
    <property type="component" value="Chromosome"/>
</dbReference>
<dbReference type="GO" id="GO:0050044">
    <property type="term" value="F:galactose-6-phosphate isomerase activity"/>
    <property type="evidence" value="ECO:0007669"/>
    <property type="project" value="UniProtKB-UniRule"/>
</dbReference>
<dbReference type="GO" id="GO:0004751">
    <property type="term" value="F:ribose-5-phosphate isomerase activity"/>
    <property type="evidence" value="ECO:0007669"/>
    <property type="project" value="TreeGrafter"/>
</dbReference>
<dbReference type="GO" id="GO:0019316">
    <property type="term" value="P:D-allose catabolic process"/>
    <property type="evidence" value="ECO:0007669"/>
    <property type="project" value="TreeGrafter"/>
</dbReference>
<dbReference type="GO" id="GO:0019388">
    <property type="term" value="P:galactose catabolic process"/>
    <property type="evidence" value="ECO:0007669"/>
    <property type="project" value="UniProtKB-UniPathway"/>
</dbReference>
<dbReference type="GO" id="GO:0019512">
    <property type="term" value="P:lactose catabolic process via tagatose-6-phosphate"/>
    <property type="evidence" value="ECO:0007669"/>
    <property type="project" value="UniProtKB-UniRule"/>
</dbReference>
<dbReference type="GO" id="GO:0009052">
    <property type="term" value="P:pentose-phosphate shunt, non-oxidative branch"/>
    <property type="evidence" value="ECO:0007669"/>
    <property type="project" value="TreeGrafter"/>
</dbReference>
<dbReference type="Gene3D" id="3.40.1400.10">
    <property type="entry name" value="Sugar-phosphate isomerase, RpiB/LacA/LacB"/>
    <property type="match status" value="1"/>
</dbReference>
<dbReference type="HAMAP" id="MF_01556">
    <property type="entry name" value="LacB"/>
    <property type="match status" value="1"/>
</dbReference>
<dbReference type="InterPro" id="IPR004784">
    <property type="entry name" value="LacB"/>
</dbReference>
<dbReference type="InterPro" id="IPR003500">
    <property type="entry name" value="RpiB_LacA_LacB"/>
</dbReference>
<dbReference type="InterPro" id="IPR036569">
    <property type="entry name" value="RpiB_LacA_LacB_sf"/>
</dbReference>
<dbReference type="NCBIfam" id="TIGR01119">
    <property type="entry name" value="lacB"/>
    <property type="match status" value="1"/>
</dbReference>
<dbReference type="NCBIfam" id="NF004051">
    <property type="entry name" value="PRK05571.1"/>
    <property type="match status" value="1"/>
</dbReference>
<dbReference type="NCBIfam" id="NF006381">
    <property type="entry name" value="PRK08622.1"/>
    <property type="match status" value="1"/>
</dbReference>
<dbReference type="NCBIfam" id="NF009258">
    <property type="entry name" value="PRK12615.1"/>
    <property type="match status" value="1"/>
</dbReference>
<dbReference type="NCBIfam" id="TIGR00689">
    <property type="entry name" value="rpiB_lacA_lacB"/>
    <property type="match status" value="1"/>
</dbReference>
<dbReference type="PANTHER" id="PTHR30345:SF0">
    <property type="entry name" value="DNA DAMAGE-REPAIR_TOLERATION PROTEIN DRT102"/>
    <property type="match status" value="1"/>
</dbReference>
<dbReference type="PANTHER" id="PTHR30345">
    <property type="entry name" value="RIBOSE-5-PHOSPHATE ISOMERASE B"/>
    <property type="match status" value="1"/>
</dbReference>
<dbReference type="Pfam" id="PF02502">
    <property type="entry name" value="LacAB_rpiB"/>
    <property type="match status" value="1"/>
</dbReference>
<dbReference type="PIRSF" id="PIRSF005384">
    <property type="entry name" value="RpiB_LacA_B"/>
    <property type="match status" value="1"/>
</dbReference>
<dbReference type="SUPFAM" id="SSF89623">
    <property type="entry name" value="Ribose/Galactose isomerase RpiB/AlsB"/>
    <property type="match status" value="1"/>
</dbReference>
<proteinExistence type="inferred from homology"/>
<organism>
    <name type="scientific">Streptococcus equi subsp. equi (strain 4047)</name>
    <dbReference type="NCBI Taxonomy" id="553482"/>
    <lineage>
        <taxon>Bacteria</taxon>
        <taxon>Bacillati</taxon>
        <taxon>Bacillota</taxon>
        <taxon>Bacilli</taxon>
        <taxon>Lactobacillales</taxon>
        <taxon>Streptococcaceae</taxon>
        <taxon>Streptococcus</taxon>
    </lineage>
</organism>
<gene>
    <name evidence="1" type="primary">lacB</name>
    <name type="ordered locus">SEQ_0528</name>
</gene>
<evidence type="ECO:0000255" key="1">
    <source>
        <dbReference type="HAMAP-Rule" id="MF_01556"/>
    </source>
</evidence>
<sequence>MKIAIGCDHIVTDEKMAVSDFLKSKGYEVIDCGTYDHTRTHYPIFGKRVGEAVANGLADLGVCICGTGVGITNAVNKVPGIRSALVRDMTTALYAKEELNANVIGFGGKITGELLMCDIIEAFIKADYKETEENKKLIAKIAHLESHNANQEDPDFFTEFLDKWDRGDYHD</sequence>